<gene>
    <name evidence="1" type="primary">thrS</name>
    <name type="ordered locus">MUL_3256</name>
</gene>
<name>SYT_MYCUA</name>
<organism>
    <name type="scientific">Mycobacterium ulcerans (strain Agy99)</name>
    <dbReference type="NCBI Taxonomy" id="362242"/>
    <lineage>
        <taxon>Bacteria</taxon>
        <taxon>Bacillati</taxon>
        <taxon>Actinomycetota</taxon>
        <taxon>Actinomycetes</taxon>
        <taxon>Mycobacteriales</taxon>
        <taxon>Mycobacteriaceae</taxon>
        <taxon>Mycobacterium</taxon>
        <taxon>Mycobacterium ulcerans group</taxon>
    </lineage>
</organism>
<keyword id="KW-0030">Aminoacyl-tRNA synthetase</keyword>
<keyword id="KW-0067">ATP-binding</keyword>
<keyword id="KW-0963">Cytoplasm</keyword>
<keyword id="KW-0436">Ligase</keyword>
<keyword id="KW-0479">Metal-binding</keyword>
<keyword id="KW-0547">Nucleotide-binding</keyword>
<keyword id="KW-0648">Protein biosynthesis</keyword>
<keyword id="KW-0694">RNA-binding</keyword>
<keyword id="KW-0820">tRNA-binding</keyword>
<keyword id="KW-0862">Zinc</keyword>
<accession>A0PSZ4</accession>
<comment type="function">
    <text evidence="1">Catalyzes the attachment of threonine to tRNA(Thr) in a two-step reaction: L-threonine is first activated by ATP to form Thr-AMP and then transferred to the acceptor end of tRNA(Thr). Also edits incorrectly charged L-seryl-tRNA(Thr).</text>
</comment>
<comment type="catalytic activity">
    <reaction evidence="1">
        <text>tRNA(Thr) + L-threonine + ATP = L-threonyl-tRNA(Thr) + AMP + diphosphate + H(+)</text>
        <dbReference type="Rhea" id="RHEA:24624"/>
        <dbReference type="Rhea" id="RHEA-COMP:9670"/>
        <dbReference type="Rhea" id="RHEA-COMP:9704"/>
        <dbReference type="ChEBI" id="CHEBI:15378"/>
        <dbReference type="ChEBI" id="CHEBI:30616"/>
        <dbReference type="ChEBI" id="CHEBI:33019"/>
        <dbReference type="ChEBI" id="CHEBI:57926"/>
        <dbReference type="ChEBI" id="CHEBI:78442"/>
        <dbReference type="ChEBI" id="CHEBI:78534"/>
        <dbReference type="ChEBI" id="CHEBI:456215"/>
        <dbReference type="EC" id="6.1.1.3"/>
    </reaction>
</comment>
<comment type="cofactor">
    <cofactor evidence="1">
        <name>Zn(2+)</name>
        <dbReference type="ChEBI" id="CHEBI:29105"/>
    </cofactor>
    <text evidence="1">Binds 1 zinc ion per subunit.</text>
</comment>
<comment type="subunit">
    <text evidence="1">Homodimer.</text>
</comment>
<comment type="subcellular location">
    <subcellularLocation>
        <location evidence="1">Cytoplasm</location>
    </subcellularLocation>
</comment>
<comment type="similarity">
    <text evidence="1">Belongs to the class-II aminoacyl-tRNA synthetase family.</text>
</comment>
<evidence type="ECO:0000255" key="1">
    <source>
        <dbReference type="HAMAP-Rule" id="MF_00184"/>
    </source>
</evidence>
<evidence type="ECO:0000255" key="2">
    <source>
        <dbReference type="PROSITE-ProRule" id="PRU01228"/>
    </source>
</evidence>
<evidence type="ECO:0000256" key="3">
    <source>
        <dbReference type="SAM" id="MobiDB-lite"/>
    </source>
</evidence>
<dbReference type="EC" id="6.1.1.3" evidence="1"/>
<dbReference type="EMBL" id="CP000325">
    <property type="protein sequence ID" value="ABL05463.1"/>
    <property type="molecule type" value="Genomic_DNA"/>
</dbReference>
<dbReference type="RefSeq" id="WP_011741072.1">
    <property type="nucleotide sequence ID" value="NC_008611.1"/>
</dbReference>
<dbReference type="SMR" id="A0PSZ4"/>
<dbReference type="KEGG" id="mul:MUL_3256"/>
<dbReference type="eggNOG" id="COG0441">
    <property type="taxonomic scope" value="Bacteria"/>
</dbReference>
<dbReference type="HOGENOM" id="CLU_008554_0_1_11"/>
<dbReference type="Proteomes" id="UP000000765">
    <property type="component" value="Chromosome"/>
</dbReference>
<dbReference type="GO" id="GO:0005737">
    <property type="term" value="C:cytoplasm"/>
    <property type="evidence" value="ECO:0007669"/>
    <property type="project" value="UniProtKB-SubCell"/>
</dbReference>
<dbReference type="GO" id="GO:0005524">
    <property type="term" value="F:ATP binding"/>
    <property type="evidence" value="ECO:0007669"/>
    <property type="project" value="UniProtKB-UniRule"/>
</dbReference>
<dbReference type="GO" id="GO:0046872">
    <property type="term" value="F:metal ion binding"/>
    <property type="evidence" value="ECO:0007669"/>
    <property type="project" value="UniProtKB-KW"/>
</dbReference>
<dbReference type="GO" id="GO:0004829">
    <property type="term" value="F:threonine-tRNA ligase activity"/>
    <property type="evidence" value="ECO:0007669"/>
    <property type="project" value="UniProtKB-UniRule"/>
</dbReference>
<dbReference type="GO" id="GO:0000049">
    <property type="term" value="F:tRNA binding"/>
    <property type="evidence" value="ECO:0007669"/>
    <property type="project" value="UniProtKB-KW"/>
</dbReference>
<dbReference type="GO" id="GO:0006435">
    <property type="term" value="P:threonyl-tRNA aminoacylation"/>
    <property type="evidence" value="ECO:0007669"/>
    <property type="project" value="UniProtKB-UniRule"/>
</dbReference>
<dbReference type="CDD" id="cd00860">
    <property type="entry name" value="ThrRS_anticodon"/>
    <property type="match status" value="1"/>
</dbReference>
<dbReference type="CDD" id="cd00771">
    <property type="entry name" value="ThrRS_core"/>
    <property type="match status" value="1"/>
</dbReference>
<dbReference type="FunFam" id="3.30.54.20:FF:000003">
    <property type="entry name" value="Threonine--tRNA ligase"/>
    <property type="match status" value="1"/>
</dbReference>
<dbReference type="FunFam" id="3.30.930.10:FF:000019">
    <property type="entry name" value="Threonine--tRNA ligase"/>
    <property type="match status" value="1"/>
</dbReference>
<dbReference type="FunFam" id="3.40.50.800:FF:000001">
    <property type="entry name" value="Threonine--tRNA ligase"/>
    <property type="match status" value="1"/>
</dbReference>
<dbReference type="FunFam" id="3.30.980.10:FF:000005">
    <property type="entry name" value="Threonyl-tRNA synthetase, mitochondrial"/>
    <property type="match status" value="1"/>
</dbReference>
<dbReference type="Gene3D" id="3.30.54.20">
    <property type="match status" value="1"/>
</dbReference>
<dbReference type="Gene3D" id="3.40.50.800">
    <property type="entry name" value="Anticodon-binding domain"/>
    <property type="match status" value="1"/>
</dbReference>
<dbReference type="Gene3D" id="3.30.930.10">
    <property type="entry name" value="Bira Bifunctional Protein, Domain 2"/>
    <property type="match status" value="1"/>
</dbReference>
<dbReference type="Gene3D" id="3.30.980.10">
    <property type="entry name" value="Threonyl-trna Synthetase, Chain A, domain 2"/>
    <property type="match status" value="1"/>
</dbReference>
<dbReference type="HAMAP" id="MF_00184">
    <property type="entry name" value="Thr_tRNA_synth"/>
    <property type="match status" value="1"/>
</dbReference>
<dbReference type="InterPro" id="IPR002314">
    <property type="entry name" value="aa-tRNA-synt_IIb"/>
</dbReference>
<dbReference type="InterPro" id="IPR006195">
    <property type="entry name" value="aa-tRNA-synth_II"/>
</dbReference>
<dbReference type="InterPro" id="IPR045864">
    <property type="entry name" value="aa-tRNA-synth_II/BPL/LPL"/>
</dbReference>
<dbReference type="InterPro" id="IPR004154">
    <property type="entry name" value="Anticodon-bd"/>
</dbReference>
<dbReference type="InterPro" id="IPR036621">
    <property type="entry name" value="Anticodon-bd_dom_sf"/>
</dbReference>
<dbReference type="InterPro" id="IPR004095">
    <property type="entry name" value="TGS"/>
</dbReference>
<dbReference type="InterPro" id="IPR002320">
    <property type="entry name" value="Thr-tRNA-ligase_IIa"/>
</dbReference>
<dbReference type="InterPro" id="IPR018163">
    <property type="entry name" value="Thr/Ala-tRNA-synth_IIc_edit"/>
</dbReference>
<dbReference type="InterPro" id="IPR047246">
    <property type="entry name" value="ThrRS_anticodon"/>
</dbReference>
<dbReference type="InterPro" id="IPR033728">
    <property type="entry name" value="ThrRS_core"/>
</dbReference>
<dbReference type="InterPro" id="IPR012947">
    <property type="entry name" value="tRNA_SAD"/>
</dbReference>
<dbReference type="NCBIfam" id="TIGR00418">
    <property type="entry name" value="thrS"/>
    <property type="match status" value="1"/>
</dbReference>
<dbReference type="PANTHER" id="PTHR11451:SF44">
    <property type="entry name" value="THREONINE--TRNA LIGASE, CHLOROPLASTIC_MITOCHONDRIAL 2"/>
    <property type="match status" value="1"/>
</dbReference>
<dbReference type="PANTHER" id="PTHR11451">
    <property type="entry name" value="THREONINE-TRNA LIGASE"/>
    <property type="match status" value="1"/>
</dbReference>
<dbReference type="Pfam" id="PF03129">
    <property type="entry name" value="HGTP_anticodon"/>
    <property type="match status" value="1"/>
</dbReference>
<dbReference type="Pfam" id="PF00587">
    <property type="entry name" value="tRNA-synt_2b"/>
    <property type="match status" value="1"/>
</dbReference>
<dbReference type="Pfam" id="PF07973">
    <property type="entry name" value="tRNA_SAD"/>
    <property type="match status" value="1"/>
</dbReference>
<dbReference type="PRINTS" id="PR01047">
    <property type="entry name" value="TRNASYNTHTHR"/>
</dbReference>
<dbReference type="SMART" id="SM00863">
    <property type="entry name" value="tRNA_SAD"/>
    <property type="match status" value="1"/>
</dbReference>
<dbReference type="SUPFAM" id="SSF52954">
    <property type="entry name" value="Class II aaRS ABD-related"/>
    <property type="match status" value="1"/>
</dbReference>
<dbReference type="SUPFAM" id="SSF55681">
    <property type="entry name" value="Class II aaRS and biotin synthetases"/>
    <property type="match status" value="1"/>
</dbReference>
<dbReference type="SUPFAM" id="SSF55186">
    <property type="entry name" value="ThrRS/AlaRS common domain"/>
    <property type="match status" value="1"/>
</dbReference>
<dbReference type="PROSITE" id="PS50862">
    <property type="entry name" value="AA_TRNA_LIGASE_II"/>
    <property type="match status" value="1"/>
</dbReference>
<dbReference type="PROSITE" id="PS51880">
    <property type="entry name" value="TGS"/>
    <property type="match status" value="1"/>
</dbReference>
<sequence length="691" mass="77192">MSVPAQPAPGADGGDPRQPIRVPAGTTAAAAIGEAGLPRRGAPDAIVVVRDAEGKLRDLSWVPDADAEVTPIAANTDDGRSVIRHSTAHVLAQAVQDLFPQAKLGIGPPITDGFYYDFEVLEPFTPDDLQALEKRMRQIVKEGQLFDRRVFESKDQAREELANEPYKVELVDDKSGDPDVMEVGGDELTAYDNLNPRTRERVWGDLCRGPHISTTKHIPAFKLTRSSAAYWRGDQKNASLQRIYGTAWESQEALDTHIELIEEAQRRDHRKLGVELDLFSFPDEIGSGLAVFHPKGGIVRRELEDYSRRKHTEAGYQFVNSPHITKAQLFHTSGHLDWYADGMFPPMQIDAEYNTDGTVRKPGQDYYLKPMNCPMHCLIFRARGRSYRELPLRLFEFGTVYRYEKSGVVHGLTRVRGLTMDDAHIFCTREQMRDELRSLLRFVLDLLSDYGLTDFYLELSTKDPDKFVGSDEVWEEATNVLAEVGAESSLELVPDPGGAAFYGPKISVQVKDALGRTWQMSTIQLDFNFPERFGLEYTAADGTRQRPVMIHRALFGSIERFFGILTEHYAGAFPAWLAPVQAVGIPVADEHIAYLGQVAAQLKSHGVRVEVDTSDDRMAKKIVHHTNQKVPFMLLAGDRDVQADAVSFRFGDRTQINGVPREAAVAAIVDWISRRENATPTGELVKVDSGE</sequence>
<protein>
    <recommendedName>
        <fullName evidence="1">Threonine--tRNA ligase</fullName>
        <ecNumber evidence="1">6.1.1.3</ecNumber>
    </recommendedName>
    <alternativeName>
        <fullName evidence="1">Threonyl-tRNA synthetase</fullName>
        <shortName evidence="1">ThrRS</shortName>
    </alternativeName>
</protein>
<feature type="chain" id="PRO_1000020445" description="Threonine--tRNA ligase">
    <location>
        <begin position="1"/>
        <end position="691"/>
    </location>
</feature>
<feature type="domain" description="TGS" evidence="2">
    <location>
        <begin position="1"/>
        <end position="73"/>
    </location>
</feature>
<feature type="region of interest" description="Disordered" evidence="3">
    <location>
        <begin position="1"/>
        <end position="22"/>
    </location>
</feature>
<feature type="region of interest" description="Catalytic" evidence="1">
    <location>
        <begin position="268"/>
        <end position="574"/>
    </location>
</feature>
<feature type="binding site" evidence="1">
    <location>
        <position position="373"/>
    </location>
    <ligand>
        <name>Zn(2+)</name>
        <dbReference type="ChEBI" id="CHEBI:29105"/>
    </ligand>
</feature>
<feature type="binding site" evidence="1">
    <location>
        <position position="424"/>
    </location>
    <ligand>
        <name>Zn(2+)</name>
        <dbReference type="ChEBI" id="CHEBI:29105"/>
    </ligand>
</feature>
<feature type="binding site" evidence="1">
    <location>
        <position position="551"/>
    </location>
    <ligand>
        <name>Zn(2+)</name>
        <dbReference type="ChEBI" id="CHEBI:29105"/>
    </ligand>
</feature>
<proteinExistence type="inferred from homology"/>
<reference key="1">
    <citation type="journal article" date="2007" name="Genome Res.">
        <title>Reductive evolution and niche adaptation inferred from the genome of Mycobacterium ulcerans, the causative agent of Buruli ulcer.</title>
        <authorList>
            <person name="Stinear T.P."/>
            <person name="Seemann T."/>
            <person name="Pidot S."/>
            <person name="Frigui W."/>
            <person name="Reysset G."/>
            <person name="Garnier T."/>
            <person name="Meurice G."/>
            <person name="Simon D."/>
            <person name="Bouchier C."/>
            <person name="Ma L."/>
            <person name="Tichit M."/>
            <person name="Porter J.L."/>
            <person name="Ryan J."/>
            <person name="Johnson P.D.R."/>
            <person name="Davies J.K."/>
            <person name="Jenkin G.A."/>
            <person name="Small P.L.C."/>
            <person name="Jones L.M."/>
            <person name="Tekaia F."/>
            <person name="Laval F."/>
            <person name="Daffe M."/>
            <person name="Parkhill J."/>
            <person name="Cole S.T."/>
        </authorList>
    </citation>
    <scope>NUCLEOTIDE SEQUENCE [LARGE SCALE GENOMIC DNA]</scope>
    <source>
        <strain>Agy99</strain>
    </source>
</reference>